<gene>
    <name evidence="1" type="primary">rpsZ</name>
    <name evidence="1" type="synonym">rpsN</name>
    <name type="ordered locus">BALH_0121</name>
</gene>
<evidence type="ECO:0000255" key="1">
    <source>
        <dbReference type="HAMAP-Rule" id="MF_01364"/>
    </source>
</evidence>
<evidence type="ECO:0000305" key="2"/>
<keyword id="KW-0479">Metal-binding</keyword>
<keyword id="KW-0687">Ribonucleoprotein</keyword>
<keyword id="KW-0689">Ribosomal protein</keyword>
<keyword id="KW-0694">RNA-binding</keyword>
<keyword id="KW-0699">rRNA-binding</keyword>
<keyword id="KW-0862">Zinc</keyword>
<sequence length="61" mass="7296">MAKKSMIAKQKRTPKFKVQEYTRCERCGRPHSVYRKFKLCRICFRELAYKGQIPGVKKASW</sequence>
<feature type="chain" id="PRO_1000067925" description="Small ribosomal subunit protein uS14">
    <location>
        <begin position="1"/>
        <end position="61"/>
    </location>
</feature>
<feature type="binding site" evidence="1">
    <location>
        <position position="24"/>
    </location>
    <ligand>
        <name>Zn(2+)</name>
        <dbReference type="ChEBI" id="CHEBI:29105"/>
    </ligand>
</feature>
<feature type="binding site" evidence="1">
    <location>
        <position position="27"/>
    </location>
    <ligand>
        <name>Zn(2+)</name>
        <dbReference type="ChEBI" id="CHEBI:29105"/>
    </ligand>
</feature>
<feature type="binding site" evidence="1">
    <location>
        <position position="40"/>
    </location>
    <ligand>
        <name>Zn(2+)</name>
        <dbReference type="ChEBI" id="CHEBI:29105"/>
    </ligand>
</feature>
<feature type="binding site" evidence="1">
    <location>
        <position position="43"/>
    </location>
    <ligand>
        <name>Zn(2+)</name>
        <dbReference type="ChEBI" id="CHEBI:29105"/>
    </ligand>
</feature>
<organism>
    <name type="scientific">Bacillus thuringiensis (strain Al Hakam)</name>
    <dbReference type="NCBI Taxonomy" id="412694"/>
    <lineage>
        <taxon>Bacteria</taxon>
        <taxon>Bacillati</taxon>
        <taxon>Bacillota</taxon>
        <taxon>Bacilli</taxon>
        <taxon>Bacillales</taxon>
        <taxon>Bacillaceae</taxon>
        <taxon>Bacillus</taxon>
        <taxon>Bacillus cereus group</taxon>
    </lineage>
</organism>
<accession>A0R8J3</accession>
<proteinExistence type="inferred from homology"/>
<name>RS14Z_BACAH</name>
<comment type="function">
    <text evidence="1">Binds 16S rRNA, required for the assembly of 30S particles and may also be responsible for determining the conformation of the 16S rRNA at the A site.</text>
</comment>
<comment type="cofactor">
    <cofactor evidence="1">
        <name>Zn(2+)</name>
        <dbReference type="ChEBI" id="CHEBI:29105"/>
    </cofactor>
    <text evidence="1">Binds 1 zinc ion per subunit.</text>
</comment>
<comment type="subunit">
    <text evidence="1">Part of the 30S ribosomal subunit. Contacts proteins S3 and S10.</text>
</comment>
<comment type="similarity">
    <text evidence="1">Belongs to the universal ribosomal protein uS14 family. Zinc-binding uS14 subfamily.</text>
</comment>
<reference key="1">
    <citation type="journal article" date="2007" name="J. Bacteriol.">
        <title>The complete genome sequence of Bacillus thuringiensis Al Hakam.</title>
        <authorList>
            <person name="Challacombe J.F."/>
            <person name="Altherr M.R."/>
            <person name="Xie G."/>
            <person name="Bhotika S.S."/>
            <person name="Brown N."/>
            <person name="Bruce D."/>
            <person name="Campbell C.S."/>
            <person name="Campbell M.L."/>
            <person name="Chen J."/>
            <person name="Chertkov O."/>
            <person name="Cleland C."/>
            <person name="Dimitrijevic M."/>
            <person name="Doggett N.A."/>
            <person name="Fawcett J.J."/>
            <person name="Glavina T."/>
            <person name="Goodwin L.A."/>
            <person name="Green L.D."/>
            <person name="Han C.S."/>
            <person name="Hill K.K."/>
            <person name="Hitchcock P."/>
            <person name="Jackson P.J."/>
            <person name="Keim P."/>
            <person name="Kewalramani A.R."/>
            <person name="Longmire J."/>
            <person name="Lucas S."/>
            <person name="Malfatti S."/>
            <person name="Martinez D."/>
            <person name="McMurry K."/>
            <person name="Meincke L.J."/>
            <person name="Misra M."/>
            <person name="Moseman B.L."/>
            <person name="Mundt M."/>
            <person name="Munk A.C."/>
            <person name="Okinaka R.T."/>
            <person name="Parson-Quintana B."/>
            <person name="Reilly L.P."/>
            <person name="Richardson P."/>
            <person name="Robinson D.L."/>
            <person name="Saunders E."/>
            <person name="Tapia R."/>
            <person name="Tesmer J.G."/>
            <person name="Thayer N."/>
            <person name="Thompson L.S."/>
            <person name="Tice H."/>
            <person name="Ticknor L.O."/>
            <person name="Wills P.L."/>
            <person name="Gilna P."/>
            <person name="Brettin T.S."/>
        </authorList>
    </citation>
    <scope>NUCLEOTIDE SEQUENCE [LARGE SCALE GENOMIC DNA]</scope>
    <source>
        <strain>Al Hakam</strain>
    </source>
</reference>
<dbReference type="EMBL" id="CP000485">
    <property type="protein sequence ID" value="ABK83536.1"/>
    <property type="molecule type" value="Genomic_DNA"/>
</dbReference>
<dbReference type="RefSeq" id="WP_001085700.1">
    <property type="nucleotide sequence ID" value="NC_008600.1"/>
</dbReference>
<dbReference type="SMR" id="A0R8J3"/>
<dbReference type="GeneID" id="93010930"/>
<dbReference type="KEGG" id="btl:BALH_0121"/>
<dbReference type="HOGENOM" id="CLU_139869_3_0_9"/>
<dbReference type="GO" id="GO:0015935">
    <property type="term" value="C:small ribosomal subunit"/>
    <property type="evidence" value="ECO:0007669"/>
    <property type="project" value="TreeGrafter"/>
</dbReference>
<dbReference type="GO" id="GO:0019843">
    <property type="term" value="F:rRNA binding"/>
    <property type="evidence" value="ECO:0007669"/>
    <property type="project" value="UniProtKB-UniRule"/>
</dbReference>
<dbReference type="GO" id="GO:0003735">
    <property type="term" value="F:structural constituent of ribosome"/>
    <property type="evidence" value="ECO:0007669"/>
    <property type="project" value="InterPro"/>
</dbReference>
<dbReference type="GO" id="GO:0008270">
    <property type="term" value="F:zinc ion binding"/>
    <property type="evidence" value="ECO:0007669"/>
    <property type="project" value="UniProtKB-UniRule"/>
</dbReference>
<dbReference type="GO" id="GO:0006412">
    <property type="term" value="P:translation"/>
    <property type="evidence" value="ECO:0007669"/>
    <property type="project" value="UniProtKB-UniRule"/>
</dbReference>
<dbReference type="FunFam" id="4.10.830.10:FF:000001">
    <property type="entry name" value="30S ribosomal protein S14 type Z"/>
    <property type="match status" value="1"/>
</dbReference>
<dbReference type="Gene3D" id="4.10.830.10">
    <property type="entry name" value="30s Ribosomal Protein S14, Chain N"/>
    <property type="match status" value="1"/>
</dbReference>
<dbReference type="HAMAP" id="MF_01364_B">
    <property type="entry name" value="Ribosomal_uS14_2_B"/>
    <property type="match status" value="1"/>
</dbReference>
<dbReference type="InterPro" id="IPR001209">
    <property type="entry name" value="Ribosomal_uS14"/>
</dbReference>
<dbReference type="InterPro" id="IPR023053">
    <property type="entry name" value="Ribosomal_uS14_bact"/>
</dbReference>
<dbReference type="InterPro" id="IPR018271">
    <property type="entry name" value="Ribosomal_uS14_CS"/>
</dbReference>
<dbReference type="InterPro" id="IPR043140">
    <property type="entry name" value="Ribosomal_uS14_sf"/>
</dbReference>
<dbReference type="NCBIfam" id="NF005974">
    <property type="entry name" value="PRK08061.1"/>
    <property type="match status" value="1"/>
</dbReference>
<dbReference type="PANTHER" id="PTHR19836">
    <property type="entry name" value="30S RIBOSOMAL PROTEIN S14"/>
    <property type="match status" value="1"/>
</dbReference>
<dbReference type="PANTHER" id="PTHR19836:SF26">
    <property type="entry name" value="SMALL RIBOSOMAL SUBUNIT PROTEIN US14B"/>
    <property type="match status" value="1"/>
</dbReference>
<dbReference type="Pfam" id="PF00253">
    <property type="entry name" value="Ribosomal_S14"/>
    <property type="match status" value="1"/>
</dbReference>
<dbReference type="SUPFAM" id="SSF57716">
    <property type="entry name" value="Glucocorticoid receptor-like (DNA-binding domain)"/>
    <property type="match status" value="1"/>
</dbReference>
<dbReference type="PROSITE" id="PS00527">
    <property type="entry name" value="RIBOSOMAL_S14"/>
    <property type="match status" value="1"/>
</dbReference>
<protein>
    <recommendedName>
        <fullName evidence="1">Small ribosomal subunit protein uS14</fullName>
    </recommendedName>
    <alternativeName>
        <fullName evidence="2">30S ribosomal protein S14 type Z</fullName>
    </alternativeName>
</protein>